<evidence type="ECO:0000250" key="1">
    <source>
        <dbReference type="UniProtKB" id="A2VCW5"/>
    </source>
</evidence>
<evidence type="ECO:0000250" key="2">
    <source>
        <dbReference type="UniProtKB" id="Q3U1J0"/>
    </source>
</evidence>
<evidence type="ECO:0000250" key="3">
    <source>
        <dbReference type="UniProtKB" id="Q8WUX1"/>
    </source>
</evidence>
<evidence type="ECO:0000255" key="4"/>
<evidence type="ECO:0000255" key="5">
    <source>
        <dbReference type="PROSITE-ProRule" id="PRU00114"/>
    </source>
</evidence>
<evidence type="ECO:0000256" key="6">
    <source>
        <dbReference type="SAM" id="MobiDB-lite"/>
    </source>
</evidence>
<evidence type="ECO:0000303" key="7">
    <source ref="2"/>
</evidence>
<evidence type="ECO:0000305" key="8"/>
<organism>
    <name type="scientific">Bos taurus</name>
    <name type="common">Bovine</name>
    <dbReference type="NCBI Taxonomy" id="9913"/>
    <lineage>
        <taxon>Eukaryota</taxon>
        <taxon>Metazoa</taxon>
        <taxon>Chordata</taxon>
        <taxon>Craniata</taxon>
        <taxon>Vertebrata</taxon>
        <taxon>Euteleostomi</taxon>
        <taxon>Mammalia</taxon>
        <taxon>Eutheria</taxon>
        <taxon>Laurasiatheria</taxon>
        <taxon>Artiodactyla</taxon>
        <taxon>Ruminantia</taxon>
        <taxon>Pecora</taxon>
        <taxon>Bovidae</taxon>
        <taxon>Bovinae</taxon>
        <taxon>Bos</taxon>
    </lineage>
</organism>
<protein>
    <recommendedName>
        <fullName evidence="3">Sodium-coupled neutral amino acid transporter 5</fullName>
    </recommendedName>
    <alternativeName>
        <fullName>Solute carrier family 38 member 5</fullName>
    </alternativeName>
    <alternativeName>
        <fullName>System N transporter 2</fullName>
    </alternativeName>
</protein>
<reference key="1">
    <citation type="journal article" date="2005" name="BMC Genomics">
        <title>Characterization of 954 bovine full-CDS cDNA sequences.</title>
        <authorList>
            <person name="Harhay G.P."/>
            <person name="Sonstegard T.S."/>
            <person name="Keele J.W."/>
            <person name="Heaton M.P."/>
            <person name="Clawson M.L."/>
            <person name="Snelling W.M."/>
            <person name="Wiedmann R.T."/>
            <person name="Van Tassell C.P."/>
            <person name="Smith T.P.L."/>
        </authorList>
    </citation>
    <scope>NUCLEOTIDE SEQUENCE [LARGE SCALE MRNA] (ISOFORM 1)</scope>
</reference>
<reference key="2">
    <citation type="submission" date="2006-08" db="EMBL/GenBank/DDBJ databases">
        <authorList>
            <consortium name="NIH - Mammalian Gene Collection (MGC) project"/>
        </authorList>
    </citation>
    <scope>NUCLEOTIDE SEQUENCE [LARGE SCALE MRNA] (ISOFORM 2)</scope>
    <source>
        <strain>Hereford</strain>
        <tissue>Thalamus</tissue>
    </source>
</reference>
<feature type="chain" id="PRO_0000312114" description="Sodium-coupled neutral amino acid transporter 5">
    <location>
        <begin position="1"/>
        <end position="478"/>
    </location>
</feature>
<feature type="topological domain" description="Cytoplasmic" evidence="1 4">
    <location>
        <begin position="1"/>
        <end position="57"/>
    </location>
</feature>
<feature type="transmembrane region" description="Helical" evidence="4">
    <location>
        <begin position="58"/>
        <end position="80"/>
    </location>
</feature>
<feature type="topological domain" description="Extracellular" evidence="4">
    <location>
        <begin position="81"/>
        <end position="93"/>
    </location>
</feature>
<feature type="transmembrane region" description="Helical" evidence="4">
    <location>
        <begin position="94"/>
        <end position="114"/>
    </location>
</feature>
<feature type="topological domain" description="Cytoplasmic" evidence="4">
    <location>
        <begin position="115"/>
        <end position="131"/>
    </location>
</feature>
<feature type="transmembrane region" description="Helical" evidence="4">
    <location>
        <begin position="132"/>
        <end position="152"/>
    </location>
</feature>
<feature type="topological domain" description="Extracellular" evidence="4">
    <location>
        <begin position="153"/>
        <end position="172"/>
    </location>
</feature>
<feature type="transmembrane region" description="Helical" evidence="4">
    <location>
        <begin position="173"/>
        <end position="193"/>
    </location>
</feature>
<feature type="topological domain" description="Cytoplasmic" evidence="4">
    <location>
        <begin position="194"/>
        <end position="198"/>
    </location>
</feature>
<feature type="transmembrane region" description="Helical" evidence="4">
    <location>
        <begin position="199"/>
        <end position="219"/>
    </location>
</feature>
<feature type="topological domain" description="Extracellular" evidence="4">
    <location>
        <begin position="220"/>
        <end position="263"/>
    </location>
</feature>
<feature type="transmembrane region" description="Helical" evidence="4">
    <location>
        <begin position="264"/>
        <end position="284"/>
    </location>
</feature>
<feature type="topological domain" description="Cytoplasmic" evidence="4">
    <location>
        <begin position="285"/>
        <end position="301"/>
    </location>
</feature>
<feature type="transmembrane region" description="Helical" evidence="4">
    <location>
        <begin position="302"/>
        <end position="322"/>
    </location>
</feature>
<feature type="topological domain" description="Extracellular" evidence="4">
    <location>
        <begin position="323"/>
        <end position="340"/>
    </location>
</feature>
<feature type="transmembrane region" description="Helical" evidence="4">
    <location>
        <begin position="341"/>
        <end position="361"/>
    </location>
</feature>
<feature type="topological domain" description="Cytoplasmic" evidence="4">
    <location>
        <begin position="362"/>
        <end position="382"/>
    </location>
</feature>
<feature type="transmembrane region" description="Helical" evidence="4">
    <location>
        <begin position="383"/>
        <end position="403"/>
    </location>
</feature>
<feature type="topological domain" description="Extracellular" evidence="4">
    <location>
        <begin position="404"/>
        <end position="405"/>
    </location>
</feature>
<feature type="transmembrane region" description="Helical" evidence="4">
    <location>
        <begin position="406"/>
        <end position="426"/>
    </location>
</feature>
<feature type="topological domain" description="Cytoplasmic" evidence="4">
    <location>
        <begin position="427"/>
        <end position="445"/>
    </location>
</feature>
<feature type="transmembrane region" description="Helical" evidence="4">
    <location>
        <begin position="446"/>
        <end position="466"/>
    </location>
</feature>
<feature type="topological domain" description="Extracellular" evidence="4">
    <location>
        <begin position="467"/>
        <end position="478"/>
    </location>
</feature>
<feature type="region of interest" description="Disordered" evidence="6">
    <location>
        <begin position="1"/>
        <end position="20"/>
    </location>
</feature>
<feature type="site" description="Involved in pH-sensing to the transport activity regulation" evidence="1">
    <location>
        <position position="470"/>
    </location>
</feature>
<feature type="glycosylation site" description="N-linked (GlcNAc...) asparagine" evidence="4">
    <location>
        <position position="232"/>
    </location>
</feature>
<feature type="disulfide bond" evidence="5">
    <location>
        <begin position="227"/>
        <end position="253"/>
    </location>
</feature>
<feature type="splice variant" id="VSP_029701" description="In isoform 2." evidence="7">
    <original>D</original>
    <variation>DQ</variation>
    <location>
        <position position="49"/>
    </location>
</feature>
<keyword id="KW-0025">Alternative splicing</keyword>
<keyword id="KW-1003">Cell membrane</keyword>
<keyword id="KW-1015">Disulfide bond</keyword>
<keyword id="KW-0325">Glycoprotein</keyword>
<keyword id="KW-0472">Membrane</keyword>
<keyword id="KW-1185">Reference proteome</keyword>
<keyword id="KW-0812">Transmembrane</keyword>
<keyword id="KW-1133">Transmembrane helix</keyword>
<accession>Q5E9S9</accession>
<accession>Q0VD33</accession>
<comment type="function">
    <text evidence="1 2">Symporter that cotransports neutral amino acids and sodium ions, coupled to an H(+) antiporter activity. Releases L-glutamine and glycine from astroglial cells and may participate in the glutamate/GABA-glutamine cycle and the NMDA receptors activation (By similarity). In addition contributes significantly to L-glutamine uptake in retina, namely in ganglion and Mueller cells and, therefore participates in the retinal glutamate-glutamine cycle (By similarity). The transport activity is pH sensitive, Li(+) tolerant, bidirectional and associated with large uncoupled fluxes of protons. The transport is electroneutral coupled to the cotransport of 1 Na(+) and the antiport of 1 H(+). May have particular importance for modulation of net hepatic glutamine flux (By similarity).</text>
</comment>
<comment type="catalytic activity">
    <reaction evidence="1">
        <text>L-serine(out) + Na(+)(out) + H(+)(in) = L-serine(in) + Na(+)(in) + H(+)(out)</text>
        <dbReference type="Rhea" id="RHEA:71159"/>
        <dbReference type="ChEBI" id="CHEBI:15378"/>
        <dbReference type="ChEBI" id="CHEBI:29101"/>
        <dbReference type="ChEBI" id="CHEBI:33384"/>
    </reaction>
    <physiologicalReaction direction="left-to-right" evidence="1">
        <dbReference type="Rhea" id="RHEA:71160"/>
    </physiologicalReaction>
    <physiologicalReaction direction="right-to-left" evidence="1">
        <dbReference type="Rhea" id="RHEA:71161"/>
    </physiologicalReaction>
</comment>
<comment type="catalytic activity">
    <reaction evidence="1">
        <text>L-alanine(out) + Na(+)(out) + H(+)(in) = L-alanine(in) + Na(+)(in) + H(+)(out)</text>
        <dbReference type="Rhea" id="RHEA:71163"/>
        <dbReference type="ChEBI" id="CHEBI:15378"/>
        <dbReference type="ChEBI" id="CHEBI:29101"/>
        <dbReference type="ChEBI" id="CHEBI:57972"/>
    </reaction>
    <physiologicalReaction direction="left-to-right" evidence="1">
        <dbReference type="Rhea" id="RHEA:71164"/>
    </physiologicalReaction>
    <physiologicalReaction direction="right-to-left" evidence="1">
        <dbReference type="Rhea" id="RHEA:71165"/>
    </physiologicalReaction>
</comment>
<comment type="catalytic activity">
    <reaction evidence="1">
        <text>glycine(out) + Na(+)(out) + H(+)(in) = glycine(in) + Na(+)(in) + H(+)(out)</text>
        <dbReference type="Rhea" id="RHEA:71167"/>
        <dbReference type="ChEBI" id="CHEBI:15378"/>
        <dbReference type="ChEBI" id="CHEBI:29101"/>
        <dbReference type="ChEBI" id="CHEBI:57305"/>
    </reaction>
    <physiologicalReaction direction="left-to-right" evidence="1">
        <dbReference type="Rhea" id="RHEA:71168"/>
    </physiologicalReaction>
    <physiologicalReaction direction="right-to-left" evidence="1">
        <dbReference type="Rhea" id="RHEA:71169"/>
    </physiologicalReaction>
</comment>
<comment type="catalytic activity">
    <reaction evidence="1">
        <text>L-glutamine(out) + Na(+)(out) + H(+)(in) = L-glutamine(in) + Na(+)(in) + H(+)(out)</text>
        <dbReference type="Rhea" id="RHEA:71127"/>
        <dbReference type="ChEBI" id="CHEBI:15378"/>
        <dbReference type="ChEBI" id="CHEBI:29101"/>
        <dbReference type="ChEBI" id="CHEBI:58359"/>
    </reaction>
    <physiologicalReaction direction="left-to-right" evidence="1">
        <dbReference type="Rhea" id="RHEA:71128"/>
    </physiologicalReaction>
    <physiologicalReaction direction="right-to-left" evidence="1">
        <dbReference type="Rhea" id="RHEA:71129"/>
    </physiologicalReaction>
</comment>
<comment type="catalytic activity">
    <reaction evidence="1">
        <text>L-asparagine(out) + Na(+)(out) + H(+)(in) = L-asparagine(in) + Na(+)(in) + H(+)(out)</text>
        <dbReference type="Rhea" id="RHEA:71131"/>
        <dbReference type="ChEBI" id="CHEBI:15378"/>
        <dbReference type="ChEBI" id="CHEBI:29101"/>
        <dbReference type="ChEBI" id="CHEBI:58048"/>
    </reaction>
    <physiologicalReaction direction="left-to-right" evidence="1">
        <dbReference type="Rhea" id="RHEA:71132"/>
    </physiologicalReaction>
    <physiologicalReaction direction="right-to-left" evidence="1">
        <dbReference type="Rhea" id="RHEA:71133"/>
    </physiologicalReaction>
</comment>
<comment type="catalytic activity">
    <reaction evidence="1">
        <text>L-histidine(out) + Na(+)(out) + H(+)(in) = L-histidine(in) + Na(+)(in) + H(+)(out)</text>
        <dbReference type="Rhea" id="RHEA:71135"/>
        <dbReference type="ChEBI" id="CHEBI:15378"/>
        <dbReference type="ChEBI" id="CHEBI:29101"/>
        <dbReference type="ChEBI" id="CHEBI:57595"/>
    </reaction>
    <physiologicalReaction direction="left-to-right" evidence="1">
        <dbReference type="Rhea" id="RHEA:71136"/>
    </physiologicalReaction>
    <physiologicalReaction direction="right-to-left" evidence="1">
        <dbReference type="Rhea" id="RHEA:71137"/>
    </physiologicalReaction>
</comment>
<comment type="catalytic activity">
    <reaction evidence="1">
        <text>L-cysteine(out) + Na(+)(out) + H(+)(in) = L-cysteine(in) + Na(+)(in) + H(+)(out)</text>
        <dbReference type="Rhea" id="RHEA:71171"/>
        <dbReference type="ChEBI" id="CHEBI:15378"/>
        <dbReference type="ChEBI" id="CHEBI:29101"/>
        <dbReference type="ChEBI" id="CHEBI:35235"/>
    </reaction>
    <physiologicalReaction direction="left-to-right" evidence="1">
        <dbReference type="Rhea" id="RHEA:71172"/>
    </physiologicalReaction>
    <physiologicalReaction direction="right-to-left" evidence="1">
        <dbReference type="Rhea" id="RHEA:71173"/>
    </physiologicalReaction>
</comment>
<comment type="activity regulation">
    <text evidence="1 3">Not inhibited by lithium (By similarity). Partial allosteric regulation on ions sodium binding (By similarity).</text>
</comment>
<comment type="subcellular location">
    <subcellularLocation>
        <location evidence="1">Cell membrane</location>
        <topology evidence="4">Multi-pass membrane protein</topology>
    </subcellularLocation>
    <text evidence="1">Localized at astroglial membrane.</text>
</comment>
<comment type="alternative products">
    <event type="alternative splicing"/>
    <isoform>
        <id>Q5E9S9-1</id>
        <name>1</name>
        <sequence type="displayed"/>
    </isoform>
    <isoform>
        <id>Q5E9S9-2</id>
        <name>2</name>
        <sequence type="described" ref="VSP_029701"/>
    </isoform>
</comment>
<comment type="similarity">
    <text evidence="8">Belongs to the amino acid/polyamine transporter 2 family.</text>
</comment>
<comment type="caution">
    <text evidence="1">Nakanishi et al (PMID:11698233) shows that the transport process is electrogenic, contrary to the conclusions of Hamdani et al (PMID:22821889) who finds that the transport is electroneutral with a Na(+):L-glutamine stoichiometry of 1:1 (By similarity). Hamdani et al. shows that this electrogenic transport describes by Nakanishi et al. would correspond to large uncoupled fluxes of protons (By similarity).</text>
</comment>
<sequence>MAISSAEGMELQDPKMNGALPGNAVEQEHEGFLPSHSPSPGRKPAQFMDFEGKTSFGMSVFNLSNAIMGSGILGLAYAMAHTGILLFLALLLCIALLSSYSIHLLLTCAGVVGIRAYEQLGQRALGPAGKVVVAAVICLHNVGAMSSYLFIIKSELPLVIATFLDMDPEGDWFLKGNLLIIIVSVLIILPLALMRHLGYLGYTSGLSLTCMLFFLISVIYKKFQLGCTVGHNGTAVESKSSPSLPIHGLNTSCEAQMFTADSQMFYTVPIMAFAFVCHPEVLPIYTELCRPSKRRMQAVANVSIGAMFCMYGLTATFGYLTFYSSVEAEMLHMYSQHDLLILCVRLAVLLAVTLTVPVVLFPIRRALQQLLFPSKAFSWPRHVAIALILLVLVNVLVICVPTIRDIFGVIGSTSAPSLIFILPSIFYLRIVPSEVEPLYSWPKIQALCFGVLGVLFMAISLGFMFANWATGQSHVSGH</sequence>
<gene>
    <name evidence="3" type="primary">SLC38A5</name>
    <name type="synonym">SNAT5</name>
</gene>
<name>S38A5_BOVIN</name>
<proteinExistence type="evidence at transcript level"/>
<dbReference type="EMBL" id="BT020841">
    <property type="protein sequence ID" value="AAX08858.1"/>
    <property type="molecule type" value="mRNA"/>
</dbReference>
<dbReference type="EMBL" id="BC119859">
    <property type="protein sequence ID" value="AAI19860.1"/>
    <property type="molecule type" value="mRNA"/>
</dbReference>
<dbReference type="RefSeq" id="NP_001015580.1">
    <molecule id="Q5E9S9-1"/>
    <property type="nucleotide sequence ID" value="NM_001015580.1"/>
</dbReference>
<dbReference type="RefSeq" id="XP_010820194.1">
    <molecule id="Q5E9S9-2"/>
    <property type="nucleotide sequence ID" value="XM_010821892.4"/>
</dbReference>
<dbReference type="SMR" id="Q5E9S9"/>
<dbReference type="FunCoup" id="Q5E9S9">
    <property type="interactions" value="23"/>
</dbReference>
<dbReference type="GlyCosmos" id="Q5E9S9">
    <property type="glycosylation" value="1 site, No reported glycans"/>
</dbReference>
<dbReference type="GlyGen" id="Q5E9S9">
    <property type="glycosylation" value="1 site"/>
</dbReference>
<dbReference type="PaxDb" id="9913-ENSBTAP00000015740"/>
<dbReference type="Ensembl" id="ENSBTAT00000015740.5">
    <molecule id="Q5E9S9-2"/>
    <property type="protein sequence ID" value="ENSBTAP00000015740.4"/>
    <property type="gene ID" value="ENSBTAG00000011854.6"/>
</dbReference>
<dbReference type="GeneID" id="512495"/>
<dbReference type="KEGG" id="bta:512495"/>
<dbReference type="CTD" id="92745"/>
<dbReference type="VEuPathDB" id="HostDB:ENSBTAG00000011854"/>
<dbReference type="eggNOG" id="KOG1305">
    <property type="taxonomic scope" value="Eukaryota"/>
</dbReference>
<dbReference type="GeneTree" id="ENSGT00940000161233"/>
<dbReference type="HOGENOM" id="CLU_009020_0_2_1"/>
<dbReference type="InParanoid" id="Q5E9S9"/>
<dbReference type="OMA" id="FGCARFG"/>
<dbReference type="OrthoDB" id="655540at2759"/>
<dbReference type="TreeFam" id="TF328787"/>
<dbReference type="Reactome" id="R-BTA-352230">
    <property type="pathway name" value="Amino acid transport across the plasma membrane"/>
</dbReference>
<dbReference type="Proteomes" id="UP000009136">
    <property type="component" value="Chromosome X"/>
</dbReference>
<dbReference type="Bgee" id="ENSBTAG00000011854">
    <property type="expression patterns" value="Expressed in Ammon's horn and 83 other cell types or tissues"/>
</dbReference>
<dbReference type="GO" id="GO:0005886">
    <property type="term" value="C:plasma membrane"/>
    <property type="evidence" value="ECO:0000250"/>
    <property type="project" value="UniProtKB"/>
</dbReference>
<dbReference type="GO" id="GO:0015187">
    <property type="term" value="F:glycine transmembrane transporter activity"/>
    <property type="evidence" value="ECO:0000318"/>
    <property type="project" value="GO_Central"/>
</dbReference>
<dbReference type="GO" id="GO:0015186">
    <property type="term" value="F:L-glutamine transmembrane transporter activity"/>
    <property type="evidence" value="ECO:0000318"/>
    <property type="project" value="GO_Central"/>
</dbReference>
<dbReference type="GO" id="GO:0140830">
    <property type="term" value="F:L-glutamine, sodium:proton antiporter activity"/>
    <property type="evidence" value="ECO:0000250"/>
    <property type="project" value="UniProtKB"/>
</dbReference>
<dbReference type="GO" id="GO:0140893">
    <property type="term" value="F:neutral amino acid, sodium:proton antiporter activity"/>
    <property type="evidence" value="ECO:0000250"/>
    <property type="project" value="UniProtKB"/>
</dbReference>
<dbReference type="GO" id="GO:0032973">
    <property type="term" value="P:amino acid export across plasma membrane"/>
    <property type="evidence" value="ECO:0000250"/>
    <property type="project" value="UniProtKB"/>
</dbReference>
<dbReference type="GO" id="GO:0089718">
    <property type="term" value="P:amino acid import across plasma membrane"/>
    <property type="evidence" value="ECO:0000250"/>
    <property type="project" value="UniProtKB"/>
</dbReference>
<dbReference type="GO" id="GO:0006868">
    <property type="term" value="P:glutamine transport"/>
    <property type="evidence" value="ECO:0000318"/>
    <property type="project" value="GO_Central"/>
</dbReference>
<dbReference type="GO" id="GO:0015816">
    <property type="term" value="P:glycine transport"/>
    <property type="evidence" value="ECO:0000318"/>
    <property type="project" value="GO_Central"/>
</dbReference>
<dbReference type="GO" id="GO:1903803">
    <property type="term" value="P:L-glutamine import across plasma membrane"/>
    <property type="evidence" value="ECO:0000250"/>
    <property type="project" value="UniProtKB"/>
</dbReference>
<dbReference type="GO" id="GO:0089709">
    <property type="term" value="P:L-histidine transmembrane transport"/>
    <property type="evidence" value="ECO:0000318"/>
    <property type="project" value="GO_Central"/>
</dbReference>
<dbReference type="GO" id="GO:1903812">
    <property type="term" value="P:L-serine import across plasma membrane"/>
    <property type="evidence" value="ECO:0000250"/>
    <property type="project" value="UniProtKB"/>
</dbReference>
<dbReference type="GO" id="GO:0015804">
    <property type="term" value="P:neutral amino acid transport"/>
    <property type="evidence" value="ECO:0000250"/>
    <property type="project" value="UniProtKB"/>
</dbReference>
<dbReference type="GO" id="GO:0032329">
    <property type="term" value="P:serine transport"/>
    <property type="evidence" value="ECO:0000318"/>
    <property type="project" value="GO_Central"/>
</dbReference>
<dbReference type="InterPro" id="IPR013057">
    <property type="entry name" value="AA_transpt_TM"/>
</dbReference>
<dbReference type="PANTHER" id="PTHR22950">
    <property type="entry name" value="AMINO ACID TRANSPORTER"/>
    <property type="match status" value="1"/>
</dbReference>
<dbReference type="PANTHER" id="PTHR22950:SF74">
    <property type="entry name" value="SODIUM-COUPLED NEUTRAL AMINO ACID TRANSPORTER 5"/>
    <property type="match status" value="1"/>
</dbReference>
<dbReference type="Pfam" id="PF01490">
    <property type="entry name" value="Aa_trans"/>
    <property type="match status" value="1"/>
</dbReference>